<gene>
    <name evidence="1" type="primary">gpmA</name>
    <name type="ordered locus">PPA0364</name>
</gene>
<organism>
    <name type="scientific">Cutibacterium acnes (strain DSM 16379 / KPA171202)</name>
    <name type="common">Propionibacterium acnes</name>
    <dbReference type="NCBI Taxonomy" id="267747"/>
    <lineage>
        <taxon>Bacteria</taxon>
        <taxon>Bacillati</taxon>
        <taxon>Actinomycetota</taxon>
        <taxon>Actinomycetes</taxon>
        <taxon>Propionibacteriales</taxon>
        <taxon>Propionibacteriaceae</taxon>
        <taxon>Cutibacterium</taxon>
    </lineage>
</organism>
<comment type="function">
    <text evidence="1">Catalyzes the interconversion of 2-phosphoglycerate and 3-phosphoglycerate.</text>
</comment>
<comment type="catalytic activity">
    <reaction evidence="1">
        <text>(2R)-2-phosphoglycerate = (2R)-3-phosphoglycerate</text>
        <dbReference type="Rhea" id="RHEA:15901"/>
        <dbReference type="ChEBI" id="CHEBI:58272"/>
        <dbReference type="ChEBI" id="CHEBI:58289"/>
        <dbReference type="EC" id="5.4.2.11"/>
    </reaction>
</comment>
<comment type="pathway">
    <text evidence="1">Carbohydrate degradation; glycolysis; pyruvate from D-glyceraldehyde 3-phosphate: step 3/5.</text>
</comment>
<comment type="similarity">
    <text evidence="1">Belongs to the phosphoglycerate mutase family. BPG-dependent PGAM subfamily.</text>
</comment>
<accession>Q6AAU8</accession>
<protein>
    <recommendedName>
        <fullName evidence="1">2,3-bisphosphoglycerate-dependent phosphoglycerate mutase</fullName>
        <shortName evidence="1">BPG-dependent PGAM</shortName>
        <shortName evidence="1">PGAM</shortName>
        <shortName evidence="1">Phosphoglyceromutase</shortName>
        <shortName evidence="1">dPGM</shortName>
        <ecNumber evidence="1">5.4.2.11</ecNumber>
    </recommendedName>
</protein>
<proteinExistence type="inferred from homology"/>
<evidence type="ECO:0000255" key="1">
    <source>
        <dbReference type="HAMAP-Rule" id="MF_01039"/>
    </source>
</evidence>
<name>GPMA_CUTAK</name>
<keyword id="KW-0312">Gluconeogenesis</keyword>
<keyword id="KW-0324">Glycolysis</keyword>
<keyword id="KW-0413">Isomerase</keyword>
<reference key="1">
    <citation type="journal article" date="2004" name="Science">
        <title>The complete genome sequence of Propionibacterium acnes, a commensal of human skin.</title>
        <authorList>
            <person name="Brueggemann H."/>
            <person name="Henne A."/>
            <person name="Hoster F."/>
            <person name="Liesegang H."/>
            <person name="Wiezer A."/>
            <person name="Strittmatter A."/>
            <person name="Hujer S."/>
            <person name="Duerre P."/>
            <person name="Gottschalk G."/>
        </authorList>
    </citation>
    <scope>NUCLEOTIDE SEQUENCE [LARGE SCALE GENOMIC DNA]</scope>
    <source>
        <strain>DSM 16379 / KPA171202</strain>
    </source>
</reference>
<sequence length="249" mass="27990">MTAKLILLRHGESEWNSKNLFTGWVDVDLNEKGEGEARHAADLLKQENLLPDIVHTSLLRRAIHTAYLALDGCDRHWIPVHRSWRLNERHYGALQGLNKAETKEKYGNDQFMAWRRSYDVRPPDLDRDSEFSQFHDPRYADIPASERPVAECLKDVVARMVPYFTSDIAADLKDGKTVLVAAHGNSLRALVKHLDEISDEDIAGLNIPTGIPLFYELDDNLKPVTRGGRYLDPEAAAAGAKAVANQGNK</sequence>
<feature type="chain" id="PRO_0000229136" description="2,3-bisphosphoglycerate-dependent phosphoglycerate mutase">
    <location>
        <begin position="1"/>
        <end position="249"/>
    </location>
</feature>
<feature type="active site" description="Tele-phosphohistidine intermediate" evidence="1">
    <location>
        <position position="10"/>
    </location>
</feature>
<feature type="active site" description="Proton donor/acceptor" evidence="1">
    <location>
        <position position="88"/>
    </location>
</feature>
<feature type="binding site" evidence="1">
    <location>
        <begin position="9"/>
        <end position="16"/>
    </location>
    <ligand>
        <name>substrate</name>
    </ligand>
</feature>
<feature type="binding site" evidence="1">
    <location>
        <begin position="22"/>
        <end position="23"/>
    </location>
    <ligand>
        <name>substrate</name>
    </ligand>
</feature>
<feature type="binding site" evidence="1">
    <location>
        <position position="61"/>
    </location>
    <ligand>
        <name>substrate</name>
    </ligand>
</feature>
<feature type="binding site" evidence="1">
    <location>
        <begin position="88"/>
        <end position="91"/>
    </location>
    <ligand>
        <name>substrate</name>
    </ligand>
</feature>
<feature type="binding site" evidence="1">
    <location>
        <position position="99"/>
    </location>
    <ligand>
        <name>substrate</name>
    </ligand>
</feature>
<feature type="binding site" evidence="1">
    <location>
        <begin position="115"/>
        <end position="116"/>
    </location>
    <ligand>
        <name>substrate</name>
    </ligand>
</feature>
<feature type="binding site" evidence="1">
    <location>
        <begin position="184"/>
        <end position="185"/>
    </location>
    <ligand>
        <name>substrate</name>
    </ligand>
</feature>
<feature type="site" description="Transition state stabilizer" evidence="1">
    <location>
        <position position="183"/>
    </location>
</feature>
<dbReference type="EC" id="5.4.2.11" evidence="1"/>
<dbReference type="EMBL" id="AE017283">
    <property type="protein sequence ID" value="AAT82118.1"/>
    <property type="molecule type" value="Genomic_DNA"/>
</dbReference>
<dbReference type="RefSeq" id="WP_002517074.1">
    <property type="nucleotide sequence ID" value="NZ_CP025935.1"/>
</dbReference>
<dbReference type="SMR" id="Q6AAU8"/>
<dbReference type="EnsemblBacteria" id="AAT82118">
    <property type="protein sequence ID" value="AAT82118"/>
    <property type="gene ID" value="PPA0364"/>
</dbReference>
<dbReference type="KEGG" id="pac:PPA0364"/>
<dbReference type="eggNOG" id="COG0588">
    <property type="taxonomic scope" value="Bacteria"/>
</dbReference>
<dbReference type="HOGENOM" id="CLU_033323_1_1_11"/>
<dbReference type="UniPathway" id="UPA00109">
    <property type="reaction ID" value="UER00186"/>
</dbReference>
<dbReference type="Proteomes" id="UP000000603">
    <property type="component" value="Chromosome"/>
</dbReference>
<dbReference type="GO" id="GO:0004619">
    <property type="term" value="F:phosphoglycerate mutase activity"/>
    <property type="evidence" value="ECO:0007669"/>
    <property type="project" value="UniProtKB-EC"/>
</dbReference>
<dbReference type="GO" id="GO:0006094">
    <property type="term" value="P:gluconeogenesis"/>
    <property type="evidence" value="ECO:0007669"/>
    <property type="project" value="UniProtKB-UniRule"/>
</dbReference>
<dbReference type="GO" id="GO:0006096">
    <property type="term" value="P:glycolytic process"/>
    <property type="evidence" value="ECO:0007669"/>
    <property type="project" value="UniProtKB-UniRule"/>
</dbReference>
<dbReference type="CDD" id="cd07067">
    <property type="entry name" value="HP_PGM_like"/>
    <property type="match status" value="1"/>
</dbReference>
<dbReference type="FunFam" id="3.40.50.1240:FF:000003">
    <property type="entry name" value="2,3-bisphosphoglycerate-dependent phosphoglycerate mutase"/>
    <property type="match status" value="1"/>
</dbReference>
<dbReference type="Gene3D" id="3.40.50.1240">
    <property type="entry name" value="Phosphoglycerate mutase-like"/>
    <property type="match status" value="1"/>
</dbReference>
<dbReference type="HAMAP" id="MF_01039">
    <property type="entry name" value="PGAM_GpmA"/>
    <property type="match status" value="1"/>
</dbReference>
<dbReference type="InterPro" id="IPR013078">
    <property type="entry name" value="His_Pase_superF_clade-1"/>
</dbReference>
<dbReference type="InterPro" id="IPR029033">
    <property type="entry name" value="His_PPase_superfam"/>
</dbReference>
<dbReference type="InterPro" id="IPR001345">
    <property type="entry name" value="PG/BPGM_mutase_AS"/>
</dbReference>
<dbReference type="InterPro" id="IPR005952">
    <property type="entry name" value="Phosphogly_mut1"/>
</dbReference>
<dbReference type="NCBIfam" id="TIGR01258">
    <property type="entry name" value="pgm_1"/>
    <property type="match status" value="1"/>
</dbReference>
<dbReference type="NCBIfam" id="NF010713">
    <property type="entry name" value="PRK14115.1"/>
    <property type="match status" value="1"/>
</dbReference>
<dbReference type="NCBIfam" id="NF010718">
    <property type="entry name" value="PRK14120.1"/>
    <property type="match status" value="1"/>
</dbReference>
<dbReference type="PANTHER" id="PTHR11931">
    <property type="entry name" value="PHOSPHOGLYCERATE MUTASE"/>
    <property type="match status" value="1"/>
</dbReference>
<dbReference type="Pfam" id="PF00300">
    <property type="entry name" value="His_Phos_1"/>
    <property type="match status" value="2"/>
</dbReference>
<dbReference type="PIRSF" id="PIRSF000709">
    <property type="entry name" value="6PFK_2-Ptase"/>
    <property type="match status" value="1"/>
</dbReference>
<dbReference type="SMART" id="SM00855">
    <property type="entry name" value="PGAM"/>
    <property type="match status" value="1"/>
</dbReference>
<dbReference type="SUPFAM" id="SSF53254">
    <property type="entry name" value="Phosphoglycerate mutase-like"/>
    <property type="match status" value="1"/>
</dbReference>
<dbReference type="PROSITE" id="PS00175">
    <property type="entry name" value="PG_MUTASE"/>
    <property type="match status" value="1"/>
</dbReference>